<feature type="chain" id="PRO_1000149532" description="2,3-bisphosphoglycerate-dependent phosphoglycerate mutase">
    <location>
        <begin position="1"/>
        <end position="230"/>
    </location>
</feature>
<feature type="active site" description="Tele-phosphohistidine intermediate" evidence="1">
    <location>
        <position position="9"/>
    </location>
</feature>
<feature type="active site" description="Proton donor/acceptor" evidence="1">
    <location>
        <position position="87"/>
    </location>
</feature>
<feature type="binding site" evidence="1">
    <location>
        <begin position="8"/>
        <end position="15"/>
    </location>
    <ligand>
        <name>substrate</name>
    </ligand>
</feature>
<feature type="binding site" evidence="1">
    <location>
        <begin position="21"/>
        <end position="22"/>
    </location>
    <ligand>
        <name>substrate</name>
    </ligand>
</feature>
<feature type="binding site" evidence="1">
    <location>
        <position position="60"/>
    </location>
    <ligand>
        <name>substrate</name>
    </ligand>
</feature>
<feature type="binding site" evidence="1">
    <location>
        <begin position="87"/>
        <end position="90"/>
    </location>
    <ligand>
        <name>substrate</name>
    </ligand>
</feature>
<feature type="binding site" evidence="1">
    <location>
        <position position="98"/>
    </location>
    <ligand>
        <name>substrate</name>
    </ligand>
</feature>
<feature type="binding site" evidence="1">
    <location>
        <begin position="114"/>
        <end position="115"/>
    </location>
    <ligand>
        <name>substrate</name>
    </ligand>
</feature>
<feature type="binding site" evidence="1">
    <location>
        <begin position="183"/>
        <end position="184"/>
    </location>
    <ligand>
        <name>substrate</name>
    </ligand>
</feature>
<feature type="site" description="Transition state stabilizer" evidence="1">
    <location>
        <position position="182"/>
    </location>
</feature>
<accession>C1C8P5</accession>
<sequence length="230" mass="26051">MVKLVFARHGESEWNKANLFTGWADVDLSEKGTQQAIDAGKLIKEAGIEFDQAYTSVLKRAIKTTNLALEASDQLWVPVEKSWRLNERHYGGLTGKNKAEAAEQFGDEQVHIWRRSYDVLPPNMDRDDEHSAHTDRRYASLDDSVIPDAENLKVTLERALPFWEDKIAPALKDGKNVFVGAHGNSIRALVKHIKGLSDDEIMDVEIPNFPPLVFEFDEKLNVVSEYYLGK</sequence>
<proteinExistence type="inferred from homology"/>
<evidence type="ECO:0000255" key="1">
    <source>
        <dbReference type="HAMAP-Rule" id="MF_01039"/>
    </source>
</evidence>
<keyword id="KW-0312">Gluconeogenesis</keyword>
<keyword id="KW-0324">Glycolysis</keyword>
<keyword id="KW-0413">Isomerase</keyword>
<protein>
    <recommendedName>
        <fullName evidence="1">2,3-bisphosphoglycerate-dependent phosphoglycerate mutase</fullName>
        <shortName evidence="1">BPG-dependent PGAM</shortName>
        <shortName evidence="1">PGAM</shortName>
        <shortName evidence="1">Phosphoglyceromutase</shortName>
        <shortName evidence="1">dPGM</shortName>
        <ecNumber evidence="1">5.4.2.11</ecNumber>
    </recommendedName>
</protein>
<name>GPMA_STRP7</name>
<comment type="function">
    <text evidence="1">Catalyzes the interconversion of 2-phosphoglycerate and 3-phosphoglycerate.</text>
</comment>
<comment type="catalytic activity">
    <reaction evidence="1">
        <text>(2R)-2-phosphoglycerate = (2R)-3-phosphoglycerate</text>
        <dbReference type="Rhea" id="RHEA:15901"/>
        <dbReference type="ChEBI" id="CHEBI:58272"/>
        <dbReference type="ChEBI" id="CHEBI:58289"/>
        <dbReference type="EC" id="5.4.2.11"/>
    </reaction>
</comment>
<comment type="pathway">
    <text evidence="1">Carbohydrate degradation; glycolysis; pyruvate from D-glyceraldehyde 3-phosphate: step 3/5.</text>
</comment>
<comment type="similarity">
    <text evidence="1">Belongs to the phosphoglycerate mutase family. BPG-dependent PGAM subfamily.</text>
</comment>
<dbReference type="EC" id="5.4.2.11" evidence="1"/>
<dbReference type="EMBL" id="CP000918">
    <property type="protein sequence ID" value="ACO16325.1"/>
    <property type="molecule type" value="Genomic_DNA"/>
</dbReference>
<dbReference type="RefSeq" id="WP_000240129.1">
    <property type="nucleotide sequence ID" value="NC_012468.1"/>
</dbReference>
<dbReference type="SMR" id="C1C8P5"/>
<dbReference type="KEGG" id="snm:SP70585_1696"/>
<dbReference type="HOGENOM" id="CLU_033323_1_5_9"/>
<dbReference type="UniPathway" id="UPA00109">
    <property type="reaction ID" value="UER00186"/>
</dbReference>
<dbReference type="Proteomes" id="UP000002211">
    <property type="component" value="Chromosome"/>
</dbReference>
<dbReference type="GO" id="GO:0004619">
    <property type="term" value="F:phosphoglycerate mutase activity"/>
    <property type="evidence" value="ECO:0007669"/>
    <property type="project" value="UniProtKB-EC"/>
</dbReference>
<dbReference type="GO" id="GO:0006094">
    <property type="term" value="P:gluconeogenesis"/>
    <property type="evidence" value="ECO:0007669"/>
    <property type="project" value="UniProtKB-UniRule"/>
</dbReference>
<dbReference type="GO" id="GO:0006096">
    <property type="term" value="P:glycolytic process"/>
    <property type="evidence" value="ECO:0007669"/>
    <property type="project" value="UniProtKB-UniRule"/>
</dbReference>
<dbReference type="CDD" id="cd07067">
    <property type="entry name" value="HP_PGM_like"/>
    <property type="match status" value="1"/>
</dbReference>
<dbReference type="FunFam" id="3.40.50.1240:FF:000003">
    <property type="entry name" value="2,3-bisphosphoglycerate-dependent phosphoglycerate mutase"/>
    <property type="match status" value="1"/>
</dbReference>
<dbReference type="Gene3D" id="3.40.50.1240">
    <property type="entry name" value="Phosphoglycerate mutase-like"/>
    <property type="match status" value="1"/>
</dbReference>
<dbReference type="HAMAP" id="MF_01039">
    <property type="entry name" value="PGAM_GpmA"/>
    <property type="match status" value="1"/>
</dbReference>
<dbReference type="InterPro" id="IPR013078">
    <property type="entry name" value="His_Pase_superF_clade-1"/>
</dbReference>
<dbReference type="InterPro" id="IPR029033">
    <property type="entry name" value="His_PPase_superfam"/>
</dbReference>
<dbReference type="InterPro" id="IPR005952">
    <property type="entry name" value="Phosphogly_mut1"/>
</dbReference>
<dbReference type="NCBIfam" id="TIGR01258">
    <property type="entry name" value="pgm_1"/>
    <property type="match status" value="1"/>
</dbReference>
<dbReference type="NCBIfam" id="NF010713">
    <property type="entry name" value="PRK14115.1"/>
    <property type="match status" value="1"/>
</dbReference>
<dbReference type="NCBIfam" id="NF010715">
    <property type="entry name" value="PRK14117.1"/>
    <property type="match status" value="1"/>
</dbReference>
<dbReference type="PANTHER" id="PTHR11931">
    <property type="entry name" value="PHOSPHOGLYCERATE MUTASE"/>
    <property type="match status" value="1"/>
</dbReference>
<dbReference type="Pfam" id="PF00300">
    <property type="entry name" value="His_Phos_1"/>
    <property type="match status" value="1"/>
</dbReference>
<dbReference type="PIRSF" id="PIRSF000709">
    <property type="entry name" value="6PFK_2-Ptase"/>
    <property type="match status" value="1"/>
</dbReference>
<dbReference type="SMART" id="SM00855">
    <property type="entry name" value="PGAM"/>
    <property type="match status" value="1"/>
</dbReference>
<dbReference type="SUPFAM" id="SSF53254">
    <property type="entry name" value="Phosphoglycerate mutase-like"/>
    <property type="match status" value="1"/>
</dbReference>
<gene>
    <name evidence="1" type="primary">gpmA</name>
    <name type="ordered locus">SP70585_1696</name>
</gene>
<reference key="1">
    <citation type="journal article" date="2010" name="Genome Biol.">
        <title>Structure and dynamics of the pan-genome of Streptococcus pneumoniae and closely related species.</title>
        <authorList>
            <person name="Donati C."/>
            <person name="Hiller N.L."/>
            <person name="Tettelin H."/>
            <person name="Muzzi A."/>
            <person name="Croucher N.J."/>
            <person name="Angiuoli S.V."/>
            <person name="Oggioni M."/>
            <person name="Dunning Hotopp J.C."/>
            <person name="Hu F.Z."/>
            <person name="Riley D.R."/>
            <person name="Covacci A."/>
            <person name="Mitchell T.J."/>
            <person name="Bentley S.D."/>
            <person name="Kilian M."/>
            <person name="Ehrlich G.D."/>
            <person name="Rappuoli R."/>
            <person name="Moxon E.R."/>
            <person name="Masignani V."/>
        </authorList>
    </citation>
    <scope>NUCLEOTIDE SEQUENCE [LARGE SCALE GENOMIC DNA]</scope>
    <source>
        <strain>70585</strain>
    </source>
</reference>
<organism>
    <name type="scientific">Streptococcus pneumoniae (strain 70585)</name>
    <dbReference type="NCBI Taxonomy" id="488221"/>
    <lineage>
        <taxon>Bacteria</taxon>
        <taxon>Bacillati</taxon>
        <taxon>Bacillota</taxon>
        <taxon>Bacilli</taxon>
        <taxon>Lactobacillales</taxon>
        <taxon>Streptococcaceae</taxon>
        <taxon>Streptococcus</taxon>
    </lineage>
</organism>